<feature type="chain" id="PRO_1000198959" description="Aspartate--tRNA(Asp/Asn) ligase">
    <location>
        <begin position="1"/>
        <end position="591"/>
    </location>
</feature>
<feature type="region of interest" description="Aspartate" evidence="1">
    <location>
        <begin position="200"/>
        <end position="203"/>
    </location>
</feature>
<feature type="binding site" evidence="1">
    <location>
        <position position="176"/>
    </location>
    <ligand>
        <name>L-aspartate</name>
        <dbReference type="ChEBI" id="CHEBI:29991"/>
    </ligand>
</feature>
<feature type="binding site" evidence="1">
    <location>
        <begin position="222"/>
        <end position="224"/>
    </location>
    <ligand>
        <name>ATP</name>
        <dbReference type="ChEBI" id="CHEBI:30616"/>
    </ligand>
</feature>
<feature type="binding site" evidence="1">
    <location>
        <position position="222"/>
    </location>
    <ligand>
        <name>L-aspartate</name>
        <dbReference type="ChEBI" id="CHEBI:29991"/>
    </ligand>
</feature>
<feature type="binding site" evidence="1">
    <location>
        <position position="231"/>
    </location>
    <ligand>
        <name>ATP</name>
        <dbReference type="ChEBI" id="CHEBI:30616"/>
    </ligand>
</feature>
<feature type="binding site" evidence="1">
    <location>
        <position position="450"/>
    </location>
    <ligand>
        <name>L-aspartate</name>
        <dbReference type="ChEBI" id="CHEBI:29991"/>
    </ligand>
</feature>
<feature type="binding site" evidence="1">
    <location>
        <position position="484"/>
    </location>
    <ligand>
        <name>ATP</name>
        <dbReference type="ChEBI" id="CHEBI:30616"/>
    </ligand>
</feature>
<feature type="binding site" evidence="1">
    <location>
        <position position="491"/>
    </location>
    <ligand>
        <name>L-aspartate</name>
        <dbReference type="ChEBI" id="CHEBI:29991"/>
    </ligand>
</feature>
<feature type="binding site" evidence="1">
    <location>
        <begin position="536"/>
        <end position="539"/>
    </location>
    <ligand>
        <name>ATP</name>
        <dbReference type="ChEBI" id="CHEBI:30616"/>
    </ligand>
</feature>
<feature type="site" description="Important for tRNA non-discrimination" evidence="1">
    <location>
        <position position="84"/>
    </location>
</feature>
<sequence length="591" mass="66308">MAERTHACGKVTVEAVGQTVQLKGWVQKRRDLGGLIFIDLRDRTGIVQVVFNPETSKEALEVAETIRSEYVLHVEGTVVERGEGAINDNMATGRIEVQATKVNVLNAAKTTPIIIADDTDASEDVRLKYRYLDLRRPVMFNTFKMRHDVTKTIRNFLDTEEFLEVETPILTKSTPEGARDYLVPSRVHDGEFYALPQSPQLFKQLLMVGGFERYYQVARCFRDEDLRADRQPEFTQIDIEASFLTQDEILDMMERMMTKVMKDAKGVEVSAPFPRMKYADAMARYGSDKPDTRFEMELTDLSEFAAGCGFKVFTSAVESGGQVKAINAKGAASKYSRKDIDALTEFVKVYGAKGLAWLKVEEDGLKGPIAKFFGEEDANVLMSTLEATAGDLLLFVADKKSVVADSLGALRLRLGKELELIDESKFNFLWVTDWPLLEYDEDADRYFAAHHPFTMPFREDVELLETAPEKARAQAYDLVLNGYELGGGSLRIYERDVQEKMFKALGFSQEEAQEQFGFLLEAFEYGTPPHGGIALGLDRLVMLLAGRTNLRDTIAFPKTASASCLLTEAPSPVAEAQLEELNLKLSLKEEK</sequence>
<protein>
    <recommendedName>
        <fullName evidence="1">Aspartate--tRNA(Asp/Asn) ligase</fullName>
        <ecNumber evidence="1">6.1.1.23</ecNumber>
    </recommendedName>
    <alternativeName>
        <fullName evidence="1">Aspartyl-tRNA synthetase</fullName>
        <shortName evidence="1">AspRS</shortName>
    </alternativeName>
    <alternativeName>
        <fullName evidence="1">Non-discriminating aspartyl-tRNA synthetase</fullName>
        <shortName evidence="1">ND-AspRS</shortName>
    </alternativeName>
</protein>
<accession>B7HE37</accession>
<gene>
    <name evidence="1" type="primary">aspS</name>
    <name type="ordered locus">BCB4264_A4522</name>
</gene>
<organism>
    <name type="scientific">Bacillus cereus (strain B4264)</name>
    <dbReference type="NCBI Taxonomy" id="405532"/>
    <lineage>
        <taxon>Bacteria</taxon>
        <taxon>Bacillati</taxon>
        <taxon>Bacillota</taxon>
        <taxon>Bacilli</taxon>
        <taxon>Bacillales</taxon>
        <taxon>Bacillaceae</taxon>
        <taxon>Bacillus</taxon>
        <taxon>Bacillus cereus group</taxon>
    </lineage>
</organism>
<proteinExistence type="inferred from homology"/>
<comment type="function">
    <text evidence="1">Aspartyl-tRNA synthetase with relaxed tRNA specificity since it is able to aspartylate not only its cognate tRNA(Asp) but also tRNA(Asn). Reaction proceeds in two steps: L-aspartate is first activated by ATP to form Asp-AMP and then transferred to the acceptor end of tRNA(Asp/Asn).</text>
</comment>
<comment type="catalytic activity">
    <reaction evidence="1">
        <text>tRNA(Asx) + L-aspartate + ATP = L-aspartyl-tRNA(Asx) + AMP + diphosphate</text>
        <dbReference type="Rhea" id="RHEA:18349"/>
        <dbReference type="Rhea" id="RHEA-COMP:9710"/>
        <dbReference type="Rhea" id="RHEA-COMP:9711"/>
        <dbReference type="ChEBI" id="CHEBI:29991"/>
        <dbReference type="ChEBI" id="CHEBI:30616"/>
        <dbReference type="ChEBI" id="CHEBI:33019"/>
        <dbReference type="ChEBI" id="CHEBI:78442"/>
        <dbReference type="ChEBI" id="CHEBI:78516"/>
        <dbReference type="ChEBI" id="CHEBI:456215"/>
        <dbReference type="EC" id="6.1.1.23"/>
    </reaction>
</comment>
<comment type="subunit">
    <text evidence="1">Homodimer.</text>
</comment>
<comment type="subcellular location">
    <subcellularLocation>
        <location evidence="1">Cytoplasm</location>
    </subcellularLocation>
</comment>
<comment type="similarity">
    <text evidence="1">Belongs to the class-II aminoacyl-tRNA synthetase family. Type 1 subfamily.</text>
</comment>
<evidence type="ECO:0000255" key="1">
    <source>
        <dbReference type="HAMAP-Rule" id="MF_00044"/>
    </source>
</evidence>
<name>SYDND_BACC4</name>
<dbReference type="EC" id="6.1.1.23" evidence="1"/>
<dbReference type="EMBL" id="CP001176">
    <property type="protein sequence ID" value="ACK62033.1"/>
    <property type="molecule type" value="Genomic_DNA"/>
</dbReference>
<dbReference type="RefSeq" id="WP_000840898.1">
    <property type="nucleotide sequence ID" value="NZ_VEHB01000006.1"/>
</dbReference>
<dbReference type="SMR" id="B7HE37"/>
<dbReference type="KEGG" id="bcb:BCB4264_A4522"/>
<dbReference type="HOGENOM" id="CLU_014330_3_2_9"/>
<dbReference type="Proteomes" id="UP000007096">
    <property type="component" value="Chromosome"/>
</dbReference>
<dbReference type="GO" id="GO:0005737">
    <property type="term" value="C:cytoplasm"/>
    <property type="evidence" value="ECO:0007669"/>
    <property type="project" value="UniProtKB-SubCell"/>
</dbReference>
<dbReference type="GO" id="GO:0004815">
    <property type="term" value="F:aspartate-tRNA ligase activity"/>
    <property type="evidence" value="ECO:0007669"/>
    <property type="project" value="UniProtKB-UniRule"/>
</dbReference>
<dbReference type="GO" id="GO:0050560">
    <property type="term" value="F:aspartate-tRNA(Asn) ligase activity"/>
    <property type="evidence" value="ECO:0007669"/>
    <property type="project" value="UniProtKB-EC"/>
</dbReference>
<dbReference type="GO" id="GO:0005524">
    <property type="term" value="F:ATP binding"/>
    <property type="evidence" value="ECO:0007669"/>
    <property type="project" value="UniProtKB-UniRule"/>
</dbReference>
<dbReference type="GO" id="GO:0140096">
    <property type="term" value="F:catalytic activity, acting on a protein"/>
    <property type="evidence" value="ECO:0007669"/>
    <property type="project" value="UniProtKB-ARBA"/>
</dbReference>
<dbReference type="GO" id="GO:0003676">
    <property type="term" value="F:nucleic acid binding"/>
    <property type="evidence" value="ECO:0007669"/>
    <property type="project" value="InterPro"/>
</dbReference>
<dbReference type="GO" id="GO:0016740">
    <property type="term" value="F:transferase activity"/>
    <property type="evidence" value="ECO:0007669"/>
    <property type="project" value="UniProtKB-ARBA"/>
</dbReference>
<dbReference type="GO" id="GO:0006422">
    <property type="term" value="P:aspartyl-tRNA aminoacylation"/>
    <property type="evidence" value="ECO:0007669"/>
    <property type="project" value="UniProtKB-UniRule"/>
</dbReference>
<dbReference type="CDD" id="cd00777">
    <property type="entry name" value="AspRS_core"/>
    <property type="match status" value="1"/>
</dbReference>
<dbReference type="CDD" id="cd04317">
    <property type="entry name" value="EcAspRS_like_N"/>
    <property type="match status" value="1"/>
</dbReference>
<dbReference type="Gene3D" id="3.30.930.10">
    <property type="entry name" value="Bira Bifunctional Protein, Domain 2"/>
    <property type="match status" value="1"/>
</dbReference>
<dbReference type="Gene3D" id="3.30.1360.30">
    <property type="entry name" value="GAD-like domain"/>
    <property type="match status" value="1"/>
</dbReference>
<dbReference type="Gene3D" id="2.40.50.140">
    <property type="entry name" value="Nucleic acid-binding proteins"/>
    <property type="match status" value="1"/>
</dbReference>
<dbReference type="HAMAP" id="MF_00044">
    <property type="entry name" value="Asp_tRNA_synth_type1"/>
    <property type="match status" value="1"/>
</dbReference>
<dbReference type="InterPro" id="IPR004364">
    <property type="entry name" value="Aa-tRNA-synt_II"/>
</dbReference>
<dbReference type="InterPro" id="IPR006195">
    <property type="entry name" value="aa-tRNA-synth_II"/>
</dbReference>
<dbReference type="InterPro" id="IPR045864">
    <property type="entry name" value="aa-tRNA-synth_II/BPL/LPL"/>
</dbReference>
<dbReference type="InterPro" id="IPR004524">
    <property type="entry name" value="Asp-tRNA-ligase_1"/>
</dbReference>
<dbReference type="InterPro" id="IPR047089">
    <property type="entry name" value="Asp-tRNA-ligase_1_N"/>
</dbReference>
<dbReference type="InterPro" id="IPR002312">
    <property type="entry name" value="Asp/Asn-tRNA-synth_IIb"/>
</dbReference>
<dbReference type="InterPro" id="IPR047090">
    <property type="entry name" value="AspRS_core"/>
</dbReference>
<dbReference type="InterPro" id="IPR004115">
    <property type="entry name" value="GAD-like_sf"/>
</dbReference>
<dbReference type="InterPro" id="IPR029351">
    <property type="entry name" value="GAD_dom"/>
</dbReference>
<dbReference type="InterPro" id="IPR012340">
    <property type="entry name" value="NA-bd_OB-fold"/>
</dbReference>
<dbReference type="InterPro" id="IPR004365">
    <property type="entry name" value="NA-bd_OB_tRNA"/>
</dbReference>
<dbReference type="NCBIfam" id="TIGR00459">
    <property type="entry name" value="aspS_bact"/>
    <property type="match status" value="1"/>
</dbReference>
<dbReference type="NCBIfam" id="NF001750">
    <property type="entry name" value="PRK00476.1"/>
    <property type="match status" value="1"/>
</dbReference>
<dbReference type="PANTHER" id="PTHR22594:SF5">
    <property type="entry name" value="ASPARTATE--TRNA LIGASE, MITOCHONDRIAL"/>
    <property type="match status" value="1"/>
</dbReference>
<dbReference type="PANTHER" id="PTHR22594">
    <property type="entry name" value="ASPARTYL/LYSYL-TRNA SYNTHETASE"/>
    <property type="match status" value="1"/>
</dbReference>
<dbReference type="Pfam" id="PF02938">
    <property type="entry name" value="GAD"/>
    <property type="match status" value="1"/>
</dbReference>
<dbReference type="Pfam" id="PF00152">
    <property type="entry name" value="tRNA-synt_2"/>
    <property type="match status" value="1"/>
</dbReference>
<dbReference type="Pfam" id="PF01336">
    <property type="entry name" value="tRNA_anti-codon"/>
    <property type="match status" value="1"/>
</dbReference>
<dbReference type="PRINTS" id="PR01042">
    <property type="entry name" value="TRNASYNTHASP"/>
</dbReference>
<dbReference type="SUPFAM" id="SSF55681">
    <property type="entry name" value="Class II aaRS and biotin synthetases"/>
    <property type="match status" value="1"/>
</dbReference>
<dbReference type="SUPFAM" id="SSF55261">
    <property type="entry name" value="GAD domain-like"/>
    <property type="match status" value="1"/>
</dbReference>
<dbReference type="SUPFAM" id="SSF50249">
    <property type="entry name" value="Nucleic acid-binding proteins"/>
    <property type="match status" value="1"/>
</dbReference>
<dbReference type="PROSITE" id="PS50862">
    <property type="entry name" value="AA_TRNA_LIGASE_II"/>
    <property type="match status" value="1"/>
</dbReference>
<keyword id="KW-0030">Aminoacyl-tRNA synthetase</keyword>
<keyword id="KW-0067">ATP-binding</keyword>
<keyword id="KW-0963">Cytoplasm</keyword>
<keyword id="KW-0436">Ligase</keyword>
<keyword id="KW-0547">Nucleotide-binding</keyword>
<keyword id="KW-0648">Protein biosynthesis</keyword>
<reference key="1">
    <citation type="submission" date="2008-10" db="EMBL/GenBank/DDBJ databases">
        <title>Genome sequence of Bacillus cereus B4264.</title>
        <authorList>
            <person name="Dodson R.J."/>
            <person name="Durkin A.S."/>
            <person name="Rosovitz M.J."/>
            <person name="Rasko D.A."/>
            <person name="Hoffmaster A."/>
            <person name="Ravel J."/>
            <person name="Sutton G."/>
        </authorList>
    </citation>
    <scope>NUCLEOTIDE SEQUENCE [LARGE SCALE GENOMIC DNA]</scope>
    <source>
        <strain>B4264</strain>
    </source>
</reference>